<reference key="1">
    <citation type="journal article" date="2004" name="Oncogene">
        <title>Suppression subtractive hybridization and expression profiling identifies a unique set of genes overexpressed in non-small-cell lung cancer.</title>
        <authorList>
            <person name="Petroziello J."/>
            <person name="Yamane A."/>
            <person name="Westendorf L."/>
            <person name="Thompson M."/>
            <person name="McDonagh C."/>
            <person name="Cerveny C."/>
            <person name="Law C.-L."/>
            <person name="Wahl A."/>
            <person name="Carter P."/>
        </authorList>
    </citation>
    <scope>NUCLEOTIDE SEQUENCE [MRNA]</scope>
</reference>
<reference key="2">
    <citation type="submission" date="2003-10" db="EMBL/GenBank/DDBJ databases">
        <title>Identification of a human transforming gene.</title>
        <authorList>
            <person name="Kim J.W."/>
        </authorList>
    </citation>
    <scope>NUCLEOTIDE SEQUENCE [LARGE SCALE MRNA]</scope>
</reference>
<reference key="3">
    <citation type="submission" date="2008-12" db="EMBL/GenBank/DDBJ databases">
        <authorList>
            <consortium name="NHLBI resequencing and genotyping service (RS&amp;G)"/>
        </authorList>
    </citation>
    <scope>NUCLEOTIDE SEQUENCE [GENOMIC DNA]</scope>
</reference>
<reference key="4">
    <citation type="submission" date="2005-09" db="EMBL/GenBank/DDBJ databases">
        <authorList>
            <person name="Mural R.J."/>
            <person name="Istrail S."/>
            <person name="Sutton G.G."/>
            <person name="Florea L."/>
            <person name="Halpern A.L."/>
            <person name="Mobarry C.M."/>
            <person name="Lippert R."/>
            <person name="Walenz B."/>
            <person name="Shatkay H."/>
            <person name="Dew I."/>
            <person name="Miller J.R."/>
            <person name="Flanigan M.J."/>
            <person name="Edwards N.J."/>
            <person name="Bolanos R."/>
            <person name="Fasulo D."/>
            <person name="Halldorsson B.V."/>
            <person name="Hannenhalli S."/>
            <person name="Turner R."/>
            <person name="Yooseph S."/>
            <person name="Lu F."/>
            <person name="Nusskern D.R."/>
            <person name="Shue B.C."/>
            <person name="Zheng X.H."/>
            <person name="Zhong F."/>
            <person name="Delcher A.L."/>
            <person name="Huson D.H."/>
            <person name="Kravitz S.A."/>
            <person name="Mouchard L."/>
            <person name="Reinert K."/>
            <person name="Remington K.A."/>
            <person name="Clark A.G."/>
            <person name="Waterman M.S."/>
            <person name="Eichler E.E."/>
            <person name="Adams M.D."/>
            <person name="Hunkapiller M.W."/>
            <person name="Myers E.W."/>
            <person name="Venter J.C."/>
        </authorList>
    </citation>
    <scope>NUCLEOTIDE SEQUENCE [LARGE SCALE GENOMIC DNA]</scope>
</reference>
<reference key="5">
    <citation type="journal article" date="2004" name="Genome Res.">
        <title>The status, quality, and expansion of the NIH full-length cDNA project: the Mammalian Gene Collection (MGC).</title>
        <authorList>
            <consortium name="The MGC Project Team"/>
        </authorList>
    </citation>
    <scope>NUCLEOTIDE SEQUENCE [LARGE SCALE MRNA]</scope>
    <source>
        <tissue>Placenta</tissue>
    </source>
</reference>
<reference key="6">
    <citation type="journal article" date="1999" name="Mol. Cell">
        <title>A novel human SRB/MED-containing cofactor complex, SMCC, involved in transcription regulation.</title>
        <authorList>
            <person name="Gu W."/>
            <person name="Malik S."/>
            <person name="Ito M."/>
            <person name="Yuan C.-X."/>
            <person name="Fondell J.D."/>
            <person name="Zhang X."/>
            <person name="Martinez E."/>
            <person name="Qin J."/>
            <person name="Roeder R.G."/>
        </authorList>
    </citation>
    <scope>IDENTIFICATION BY MASS SPECTROMETRY</scope>
    <scope>IDENTIFICATION IN THE SMCC COMPLEX</scope>
</reference>
<reference key="7">
    <citation type="journal article" date="1999" name="Mol. Cell">
        <authorList>
            <person name="Gu W."/>
            <person name="Malik S."/>
            <person name="Ito M."/>
            <person name="Yuan C.-X."/>
            <person name="Fondell J.D."/>
            <person name="Zhang X."/>
            <person name="Martinez E."/>
            <person name="Qin J."/>
            <person name="Roeder R.G."/>
        </authorList>
    </citation>
    <scope>ERRATUM OF PUBMED:10024883</scope>
</reference>
<reference key="8">
    <citation type="journal article" date="2000" name="Nature">
        <title>TFIIH is negatively regulated by cdk8-containing mediator complexes.</title>
        <authorList>
            <person name="Akoulitchev S."/>
            <person name="Chuikov S."/>
            <person name="Reinberg D."/>
        </authorList>
    </citation>
    <scope>INTERACTION WITH MED6</scope>
</reference>
<reference key="9">
    <citation type="journal article" date="2004" name="Mol. Cell">
        <title>A set of consensus mammalian mediator subunits identified by multidimensional protein identification technology.</title>
        <authorList>
            <person name="Sato S."/>
            <person name="Tomomori-Sato C."/>
            <person name="Parmely T.J."/>
            <person name="Florens L."/>
            <person name="Zybailov B."/>
            <person name="Swanson S.K."/>
            <person name="Banks C.A.S."/>
            <person name="Jin J."/>
            <person name="Cai Y."/>
            <person name="Washburn M.P."/>
            <person name="Conaway J.W."/>
            <person name="Conaway R.C."/>
        </authorList>
    </citation>
    <scope>IDENTIFICATION BY MASS SPECTROMETRY</scope>
    <scope>IDENTIFICATION IN THE MEDIATOR COMPLEX</scope>
</reference>
<reference key="10">
    <citation type="journal article" date="2005" name="Mol. Cell">
        <title>MED1/TRAP220 exists predominantly in a TRAP/Mediator subpopulation enriched in RNA polymerase II and is required for ER-mediated transcription.</title>
        <authorList>
            <person name="Zhang X."/>
            <person name="Krutchinsky A."/>
            <person name="Fukuda A."/>
            <person name="Chen W."/>
            <person name="Yamamura S."/>
            <person name="Chait B.T."/>
            <person name="Roeder R.G."/>
        </authorList>
    </citation>
    <scope>INTERACTION WITH CCNC; MED1; MED6; MED12; MED13; MED14; MED15; MED16; MED17; MED18; MED19; MED20; MED23; MED24 AND MED26</scope>
    <scope>IDENTIFICATION BY MASS SPECTROMETRY</scope>
    <scope>IDENTIFICATION IN THE MEDIATOR COMPLEX</scope>
    <scope>ASSOCIATION OF THE MEDIATOR COMPLEX WITH RNA POLYMERASE II</scope>
</reference>
<reference key="11">
    <citation type="journal article" date="2011" name="BMC Syst. Biol.">
        <title>Initial characterization of the human central proteome.</title>
        <authorList>
            <person name="Burkard T.R."/>
            <person name="Planyavsky M."/>
            <person name="Kaupe I."/>
            <person name="Breitwieser F.P."/>
            <person name="Buerckstuemmer T."/>
            <person name="Bennett K.L."/>
            <person name="Superti-Furga G."/>
            <person name="Colinge J."/>
        </authorList>
    </citation>
    <scope>IDENTIFICATION BY MASS SPECTROMETRY [LARGE SCALE ANALYSIS]</scope>
</reference>
<protein>
    <recommendedName>
        <fullName>Mediator of RNA polymerase II transcription subunit 10</fullName>
    </recommendedName>
    <alternativeName>
        <fullName>Mediator complex subunit 10</fullName>
    </alternativeName>
    <alternativeName>
        <fullName>Transformation-related gene 17 protein</fullName>
        <shortName>TRG-17</shortName>
    </alternativeName>
    <alternativeName>
        <fullName>Transformation-related gene 20 protein</fullName>
        <shortName>TRG-20</shortName>
    </alternativeName>
</protein>
<accession>Q9BTT4</accession>
<accession>C6G491</accession>
<keyword id="KW-0002">3D-structure</keyword>
<keyword id="KW-0010">Activator</keyword>
<keyword id="KW-0539">Nucleus</keyword>
<keyword id="KW-1267">Proteomics identification</keyword>
<keyword id="KW-1185">Reference proteome</keyword>
<keyword id="KW-0804">Transcription</keyword>
<keyword id="KW-0805">Transcription regulation</keyword>
<proteinExistence type="evidence at protein level"/>
<dbReference type="EMBL" id="AY598325">
    <property type="protein sequence ID" value="AAT06736.1"/>
    <property type="molecule type" value="mRNA"/>
</dbReference>
<dbReference type="EMBL" id="AY277599">
    <property type="protein sequence ID" value="AAQ18038.1"/>
    <property type="molecule type" value="mRNA"/>
</dbReference>
<dbReference type="EMBL" id="AY453397">
    <property type="protein sequence ID" value="AAS47514.1"/>
    <property type="molecule type" value="mRNA"/>
</dbReference>
<dbReference type="EMBL" id="FJ515848">
    <property type="protein sequence ID" value="ACS13739.1"/>
    <property type="molecule type" value="Genomic_DNA"/>
</dbReference>
<dbReference type="EMBL" id="CH471102">
    <property type="protein sequence ID" value="EAX08110.1"/>
    <property type="molecule type" value="Genomic_DNA"/>
</dbReference>
<dbReference type="EMBL" id="BC003353">
    <property type="protein sequence ID" value="AAH03353.1"/>
    <property type="molecule type" value="mRNA"/>
</dbReference>
<dbReference type="CCDS" id="CCDS34134.1"/>
<dbReference type="RefSeq" id="NP_115662.2">
    <property type="nucleotide sequence ID" value="NM_032286.2"/>
</dbReference>
<dbReference type="PDB" id="7EMF">
    <property type="method" value="EM"/>
    <property type="resolution" value="3.50 A"/>
    <property type="chains" value="J=1-135"/>
</dbReference>
<dbReference type="PDB" id="7ENA">
    <property type="method" value="EM"/>
    <property type="resolution" value="4.07 A"/>
    <property type="chains" value="j=1-135"/>
</dbReference>
<dbReference type="PDB" id="7ENC">
    <property type="method" value="EM"/>
    <property type="resolution" value="4.13 A"/>
    <property type="chains" value="j=1-135"/>
</dbReference>
<dbReference type="PDB" id="7ENJ">
    <property type="method" value="EM"/>
    <property type="resolution" value="4.40 A"/>
    <property type="chains" value="J=1-135"/>
</dbReference>
<dbReference type="PDB" id="7LBM">
    <property type="method" value="EM"/>
    <property type="resolution" value="4.80 A"/>
    <property type="chains" value="v=1-135"/>
</dbReference>
<dbReference type="PDB" id="7NVR">
    <property type="method" value="EM"/>
    <property type="resolution" value="4.50 A"/>
    <property type="chains" value="k=1-135"/>
</dbReference>
<dbReference type="PDB" id="8GXQ">
    <property type="method" value="EM"/>
    <property type="resolution" value="5.04 A"/>
    <property type="chains" value="j=1-135"/>
</dbReference>
<dbReference type="PDB" id="8GXS">
    <property type="method" value="EM"/>
    <property type="resolution" value="4.16 A"/>
    <property type="chains" value="j=1-135"/>
</dbReference>
<dbReference type="PDB" id="8T9D">
    <property type="method" value="EM"/>
    <property type="resolution" value="4.66 A"/>
    <property type="chains" value="G=1-135"/>
</dbReference>
<dbReference type="PDB" id="8TQW">
    <property type="method" value="EM"/>
    <property type="resolution" value="8.20 A"/>
    <property type="chains" value="J=1-135"/>
</dbReference>
<dbReference type="PDB" id="8TRH">
    <property type="method" value="EM"/>
    <property type="resolution" value="3.70 A"/>
    <property type="chains" value="J=1-135"/>
</dbReference>
<dbReference type="PDBsum" id="7EMF"/>
<dbReference type="PDBsum" id="7ENA"/>
<dbReference type="PDBsum" id="7ENC"/>
<dbReference type="PDBsum" id="7ENJ"/>
<dbReference type="PDBsum" id="7LBM"/>
<dbReference type="PDBsum" id="7NVR"/>
<dbReference type="PDBsum" id="8GXQ"/>
<dbReference type="PDBsum" id="8GXS"/>
<dbReference type="PDBsum" id="8T9D"/>
<dbReference type="PDBsum" id="8TQW"/>
<dbReference type="PDBsum" id="8TRH"/>
<dbReference type="EMDB" id="EMD-12610"/>
<dbReference type="EMDB" id="EMD-23255"/>
<dbReference type="EMDB" id="EMD-31191"/>
<dbReference type="EMDB" id="EMD-31204"/>
<dbReference type="EMDB" id="EMD-31207"/>
<dbReference type="EMDB" id="EMD-31211"/>
<dbReference type="EMDB" id="EMD-34359"/>
<dbReference type="EMDB" id="EMD-34360"/>
<dbReference type="EMDB" id="EMD-41107"/>
<dbReference type="EMDB" id="EMD-41565"/>
<dbReference type="EMDB" id="EMD-41580"/>
<dbReference type="SMR" id="Q9BTT4"/>
<dbReference type="BioGRID" id="123974">
    <property type="interactions" value="107"/>
</dbReference>
<dbReference type="ComplexPortal" id="CPX-3227">
    <property type="entry name" value="Core mediator complex"/>
</dbReference>
<dbReference type="CORUM" id="Q9BTT4"/>
<dbReference type="DIP" id="DIP-31457N"/>
<dbReference type="FunCoup" id="Q9BTT4">
    <property type="interactions" value="2706"/>
</dbReference>
<dbReference type="IntAct" id="Q9BTT4">
    <property type="interactions" value="92"/>
</dbReference>
<dbReference type="MINT" id="Q9BTT4"/>
<dbReference type="STRING" id="9606.ENSP00000255764"/>
<dbReference type="GlyGen" id="Q9BTT4">
    <property type="glycosylation" value="1 site, 1 O-linked glycan (1 site)"/>
</dbReference>
<dbReference type="iPTMnet" id="Q9BTT4"/>
<dbReference type="PhosphoSitePlus" id="Q9BTT4"/>
<dbReference type="BioMuta" id="MED10"/>
<dbReference type="DMDM" id="74733145"/>
<dbReference type="jPOST" id="Q9BTT4"/>
<dbReference type="MassIVE" id="Q9BTT4"/>
<dbReference type="PaxDb" id="9606-ENSP00000255764"/>
<dbReference type="PeptideAtlas" id="Q9BTT4"/>
<dbReference type="ProteomicsDB" id="79008"/>
<dbReference type="Pumba" id="Q9BTT4"/>
<dbReference type="TopDownProteomics" id="Q9BTT4"/>
<dbReference type="Antibodypedia" id="43141">
    <property type="antibodies" value="34 antibodies from 18 providers"/>
</dbReference>
<dbReference type="DNASU" id="84246"/>
<dbReference type="Ensembl" id="ENST00000255764.4">
    <property type="protein sequence ID" value="ENSP00000255764.3"/>
    <property type="gene ID" value="ENSG00000133398.4"/>
</dbReference>
<dbReference type="Ensembl" id="ENST00000708561.1">
    <property type="protein sequence ID" value="ENSP00000517281.1"/>
    <property type="gene ID" value="ENSG00000291745.1"/>
</dbReference>
<dbReference type="GeneID" id="84246"/>
<dbReference type="KEGG" id="hsa:84246"/>
<dbReference type="MANE-Select" id="ENST00000255764.4">
    <property type="protein sequence ID" value="ENSP00000255764.3"/>
    <property type="RefSeq nucleotide sequence ID" value="NM_032286.3"/>
    <property type="RefSeq protein sequence ID" value="NP_115662.2"/>
</dbReference>
<dbReference type="UCSC" id="uc003jdo.4">
    <property type="organism name" value="human"/>
</dbReference>
<dbReference type="AGR" id="HGNC:28760"/>
<dbReference type="CTD" id="84246"/>
<dbReference type="DisGeNET" id="84246"/>
<dbReference type="GeneCards" id="MED10"/>
<dbReference type="HGNC" id="HGNC:28760">
    <property type="gene designation" value="MED10"/>
</dbReference>
<dbReference type="HPA" id="ENSG00000133398">
    <property type="expression patterns" value="Low tissue specificity"/>
</dbReference>
<dbReference type="MIM" id="612382">
    <property type="type" value="gene"/>
</dbReference>
<dbReference type="neXtProt" id="NX_Q9BTT4"/>
<dbReference type="OpenTargets" id="ENSG00000133398"/>
<dbReference type="PharmGKB" id="PA144596412"/>
<dbReference type="VEuPathDB" id="HostDB:ENSG00000133398"/>
<dbReference type="eggNOG" id="KOG3046">
    <property type="taxonomic scope" value="Eukaryota"/>
</dbReference>
<dbReference type="GeneTree" id="ENSGT00390000014501"/>
<dbReference type="HOGENOM" id="CLU_096169_3_0_1"/>
<dbReference type="InParanoid" id="Q9BTT4"/>
<dbReference type="OMA" id="QYQRAKM"/>
<dbReference type="OrthoDB" id="337270at2759"/>
<dbReference type="PAN-GO" id="Q9BTT4">
    <property type="GO annotations" value="4 GO annotations based on evolutionary models"/>
</dbReference>
<dbReference type="PhylomeDB" id="Q9BTT4"/>
<dbReference type="TreeFam" id="TF315096"/>
<dbReference type="PathwayCommons" id="Q9BTT4"/>
<dbReference type="Reactome" id="R-HSA-1989781">
    <property type="pathway name" value="PPARA activates gene expression"/>
</dbReference>
<dbReference type="Reactome" id="R-HSA-212436">
    <property type="pathway name" value="Generic Transcription Pathway"/>
</dbReference>
<dbReference type="Reactome" id="R-HSA-381340">
    <property type="pathway name" value="Transcriptional regulation of white adipocyte differentiation"/>
</dbReference>
<dbReference type="Reactome" id="R-HSA-9833110">
    <property type="pathway name" value="RSV-host interactions"/>
</dbReference>
<dbReference type="Reactome" id="R-HSA-9841922">
    <property type="pathway name" value="MLL4 and MLL3 complexes regulate expression of PPARG target genes in adipogenesis and hepatic steatosis"/>
</dbReference>
<dbReference type="SignaLink" id="Q9BTT4"/>
<dbReference type="SIGNOR" id="Q9BTT4"/>
<dbReference type="BioGRID-ORCS" id="84246">
    <property type="hits" value="500 hits in 1180 CRISPR screens"/>
</dbReference>
<dbReference type="CD-CODE" id="91857CE7">
    <property type="entry name" value="Nucleolus"/>
</dbReference>
<dbReference type="ChiTaRS" id="MED10">
    <property type="organism name" value="human"/>
</dbReference>
<dbReference type="GenomeRNAi" id="84246"/>
<dbReference type="Pharos" id="Q9BTT4">
    <property type="development level" value="Tdark"/>
</dbReference>
<dbReference type="PRO" id="PR:Q9BTT4"/>
<dbReference type="Proteomes" id="UP000005640">
    <property type="component" value="Chromosome 5"/>
</dbReference>
<dbReference type="RNAct" id="Q9BTT4">
    <property type="molecule type" value="protein"/>
</dbReference>
<dbReference type="Bgee" id="ENSG00000133398">
    <property type="expression patterns" value="Expressed in monocyte and 172 other cell types or tissues"/>
</dbReference>
<dbReference type="GO" id="GO:0070847">
    <property type="term" value="C:core mediator complex"/>
    <property type="evidence" value="ECO:0000353"/>
    <property type="project" value="ComplexPortal"/>
</dbReference>
<dbReference type="GO" id="GO:0016592">
    <property type="term" value="C:mediator complex"/>
    <property type="evidence" value="ECO:0007669"/>
    <property type="project" value="Ensembl"/>
</dbReference>
<dbReference type="GO" id="GO:0005654">
    <property type="term" value="C:nucleoplasm"/>
    <property type="evidence" value="ECO:0000314"/>
    <property type="project" value="HPA"/>
</dbReference>
<dbReference type="GO" id="GO:0005634">
    <property type="term" value="C:nucleus"/>
    <property type="evidence" value="ECO:0000314"/>
    <property type="project" value="ComplexPortal"/>
</dbReference>
<dbReference type="GO" id="GO:0000151">
    <property type="term" value="C:ubiquitin ligase complex"/>
    <property type="evidence" value="ECO:0007669"/>
    <property type="project" value="Ensembl"/>
</dbReference>
<dbReference type="GO" id="GO:0003712">
    <property type="term" value="F:transcription coregulator activity"/>
    <property type="evidence" value="ECO:0007669"/>
    <property type="project" value="InterPro"/>
</dbReference>
<dbReference type="GO" id="GO:0061630">
    <property type="term" value="F:ubiquitin protein ligase activity"/>
    <property type="evidence" value="ECO:0007669"/>
    <property type="project" value="Ensembl"/>
</dbReference>
<dbReference type="GO" id="GO:0032968">
    <property type="term" value="P:positive regulation of transcription elongation by RNA polymerase II"/>
    <property type="evidence" value="ECO:0000303"/>
    <property type="project" value="ComplexPortal"/>
</dbReference>
<dbReference type="GO" id="GO:0060261">
    <property type="term" value="P:positive regulation of transcription initiation by RNA polymerase II"/>
    <property type="evidence" value="ECO:0000303"/>
    <property type="project" value="ComplexPortal"/>
</dbReference>
<dbReference type="GO" id="GO:0016567">
    <property type="term" value="P:protein ubiquitination"/>
    <property type="evidence" value="ECO:0007669"/>
    <property type="project" value="Ensembl"/>
</dbReference>
<dbReference type="GO" id="GO:0051123">
    <property type="term" value="P:RNA polymerase II preinitiation complex assembly"/>
    <property type="evidence" value="ECO:0000303"/>
    <property type="project" value="ComplexPortal"/>
</dbReference>
<dbReference type="GO" id="GO:0035019">
    <property type="term" value="P:somatic stem cell population maintenance"/>
    <property type="evidence" value="ECO:0007669"/>
    <property type="project" value="Ensembl"/>
</dbReference>
<dbReference type="InterPro" id="IPR019145">
    <property type="entry name" value="Mediator_Med10"/>
</dbReference>
<dbReference type="PANTHER" id="PTHR13345">
    <property type="entry name" value="MEDIATOR OF RNA POLYMERASE II TRANSCRIPTION SUBUNIT 10"/>
    <property type="match status" value="1"/>
</dbReference>
<dbReference type="PANTHER" id="PTHR13345:SF13">
    <property type="entry name" value="MEDIATOR OF RNA POLYMERASE II TRANSCRIPTION SUBUNIT 10"/>
    <property type="match status" value="1"/>
</dbReference>
<dbReference type="Pfam" id="PF09748">
    <property type="entry name" value="Med10"/>
    <property type="match status" value="1"/>
</dbReference>
<feature type="chain" id="PRO_0000303151" description="Mediator of RNA polymerase II transcription subunit 10">
    <location>
        <begin position="1"/>
        <end position="135"/>
    </location>
</feature>
<feature type="helix" evidence="5">
    <location>
        <begin position="8"/>
        <end position="28"/>
    </location>
</feature>
<feature type="helix" evidence="5">
    <location>
        <begin position="36"/>
        <end position="59"/>
    </location>
</feature>
<feature type="helix" evidence="5">
    <location>
        <begin position="65"/>
        <end position="72"/>
    </location>
</feature>
<feature type="helix" evidence="5">
    <location>
        <begin position="78"/>
        <end position="116"/>
    </location>
</feature>
<feature type="helix" evidence="5">
    <location>
        <begin position="118"/>
        <end position="127"/>
    </location>
</feature>
<name>MED10_HUMAN</name>
<organism>
    <name type="scientific">Homo sapiens</name>
    <name type="common">Human</name>
    <dbReference type="NCBI Taxonomy" id="9606"/>
    <lineage>
        <taxon>Eukaryota</taxon>
        <taxon>Metazoa</taxon>
        <taxon>Chordata</taxon>
        <taxon>Craniata</taxon>
        <taxon>Vertebrata</taxon>
        <taxon>Euteleostomi</taxon>
        <taxon>Mammalia</taxon>
        <taxon>Eutheria</taxon>
        <taxon>Euarchontoglires</taxon>
        <taxon>Primates</taxon>
        <taxon>Haplorrhini</taxon>
        <taxon>Catarrhini</taxon>
        <taxon>Hominidae</taxon>
        <taxon>Homo</taxon>
    </lineage>
</organism>
<gene>
    <name type="primary">MED10</name>
    <name type="ORF">L6</name>
    <name type="ORF">TRG17</name>
    <name type="ORF">TRG20</name>
</gene>
<evidence type="ECO:0000269" key="1">
    <source>
    </source>
</evidence>
<evidence type="ECO:0000269" key="2">
    <source>
    </source>
</evidence>
<evidence type="ECO:0000269" key="3">
    <source>
    </source>
</evidence>
<evidence type="ECO:0000305" key="4"/>
<evidence type="ECO:0007829" key="5">
    <source>
        <dbReference type="PDB" id="7EMF"/>
    </source>
</evidence>
<comment type="function">
    <text>Component of the Mediator complex, a coactivator involved in the regulated transcription of nearly all RNA polymerase II-dependent genes. Mediator functions as a bridge to convey information from gene-specific regulatory proteins to the basal RNA polymerase II transcription machinery. Mediator is recruited to promoters by direct interactions with regulatory proteins and serves as a scaffold for the assembly of a functional preinitiation complex with RNA polymerase II and the general transcription factors.</text>
</comment>
<comment type="subunit">
    <text evidence="1 2 3">Component of the Mediator complex, which is composed of MED1, MED4, MED6, MED7, MED8, MED9, MED10, MED11, MED12, MED13, MED13L, MED14, MED15, MED16, MED17, MED18, MED19, MED20, MED21, MED22, MED23, MED24, MED25, MED26, MED27, MED29, MED30, MED31, CCNC, CDK8 and CDC2L6/CDK11. The MED12, MED13, CCNC and CDK8 subunits form a distinct module termed the CDK8 module. Mediator containing the CDK8 module is less active than Mediator lacking this module in supporting transcriptional activation. Individual preparations of the Mediator complex lacking one or more distinct subunits have been variously termed ARC, CRSP, DRIP, PC2, SMCC and TRAP.</text>
</comment>
<comment type="interaction">
    <interactant intactId="EBI-394354">
        <id>Q9BTT4</id>
    </interactant>
    <interactant intactId="EBI-11096309">
        <id>Q9NYB9-2</id>
        <label>ABI2</label>
    </interactant>
    <organismsDiffer>false</organismsDiffer>
    <experiments>3</experiments>
</comment>
<comment type="interaction">
    <interactant intactId="EBI-394354">
        <id>Q9BTT4</id>
    </interactant>
    <interactant intactId="EBI-10295284">
        <id>Q99819</id>
        <label>ARHGDIG</label>
    </interactant>
    <organismsDiffer>false</organismsDiffer>
    <experiments>3</experiments>
</comment>
<comment type="interaction">
    <interactant intactId="EBI-394354">
        <id>Q9BTT4</id>
    </interactant>
    <interactant intactId="EBI-2512153">
        <id>P04066</id>
        <label>FUCA1</label>
    </interactant>
    <organismsDiffer>false</organismsDiffer>
    <experiments>3</experiments>
</comment>
<comment type="interaction">
    <interactant intactId="EBI-394354">
        <id>Q9BTT4</id>
    </interactant>
    <interactant intactId="EBI-394632">
        <id>O43513</id>
        <label>MED7</label>
    </interactant>
    <organismsDiffer>false</organismsDiffer>
    <experiments>10</experiments>
</comment>
<comment type="interaction">
    <interactant intactId="EBI-394354">
        <id>Q9BTT4</id>
    </interactant>
    <interactant intactId="EBI-11993364">
        <id>Q9H8W5-2</id>
        <label>TRIM45</label>
    </interactant>
    <organismsDiffer>false</organismsDiffer>
    <experiments>3</experiments>
</comment>
<comment type="subcellular location">
    <subcellularLocation>
        <location evidence="4">Nucleus</location>
    </subcellularLocation>
</comment>
<comment type="similarity">
    <text evidence="4">Belongs to the Mediator complex subunit 10 family.</text>
</comment>
<sequence length="135" mass="15688">MAEKFDHLEEHLEKFVENIRQLGIIVSDFQPSSQAGLNQKLNFIVTGLQDIDKCRQQLHDITVPLEVFEYIDQGRNPQLYTKECLERALAKNEQVKGKIDTMKKFKSLLIQELSKVFPEDMAKYRSIRGEDHPPS</sequence>